<comment type="function">
    <text>Component of the central kinetochore, which mediates the attachment of the centromere to the mitotic spindle by forming essential interactions between the microtubule-associated outer kinetochore proteins and the centromere-associated inner kinetochore proteins. Required for establishing bipolar spindle-microtubule attachments and proper chromosome segregation.</text>
</comment>
<comment type="function">
    <text evidence="2">Component of the kinetochore, a multiprotein complex that assembles on centromeric DNA and attaches chromosomes to spindle microtubules, mediating chromosome segregation and sister chromatid segregation during meiosis and mitosis. Component of the inner kinetochore constitutive centromere-associated network (CCAN), which serves as a structural platform for outer kinetochore assembly.</text>
</comment>
<comment type="subunit">
    <text evidence="1 2 3 5">Component of the heterotrimeric kinetochore subcomplex CTF3, which consists of CTF3, MCM16 and MCM22 (PubMed:11782448). The CTF3 subcomplex is part of a larger constitutive centromere-associated network (CCAN) (also known as central kinetochore CTF19 complex in yeast), which is composed of at least AME1, CHL4, CNN1, CTF3, CTF19, IML3, MCM16, MCM21, MCM22, MHF1, MHF2, MIF2, NKP1, NKP2, OKP1 and WIP1 (PubMed:12408861, PubMed:22561346). Interacts with CTF19 (PubMed:11782448, PubMed:12589047). Interacts with CHL4 (PubMed:12589047).</text>
</comment>
<comment type="interaction">
    <interactant intactId="EBI-30457">
        <id>Q12748</id>
    </interactant>
    <interactant intactId="EBI-5199">
        <id>Q02732</id>
        <label>CTF19</label>
    </interactant>
    <organismsDiffer>false</organismsDiffer>
    <experiments>3</experiments>
</comment>
<comment type="interaction">
    <interactant intactId="EBI-30457">
        <id>Q12748</id>
    </interactant>
    <interactant intactId="EBI-31487">
        <id>Q12262</id>
        <label>MCM16</label>
    </interactant>
    <organismsDiffer>false</organismsDiffer>
    <experiments>4</experiments>
</comment>
<comment type="interaction">
    <interactant intactId="EBI-30457">
        <id>Q12748</id>
    </interactant>
    <interactant intactId="EBI-25691">
        <id>P47167</id>
        <label>MCM22</label>
    </interactant>
    <organismsDiffer>false</organismsDiffer>
    <experiments>3</experiments>
</comment>
<comment type="subcellular location">
    <subcellularLocation>
        <location>Nucleus</location>
    </subcellularLocation>
    <subcellularLocation>
        <location>Chromosome</location>
        <location>Centromere</location>
        <location>Kinetochore</location>
    </subcellularLocation>
    <text>Associated with kinetochores.</text>
</comment>
<comment type="miscellaneous">
    <text evidence="4">Present with 319 molecules/cell in log phase SD medium.</text>
</comment>
<comment type="similarity">
    <text evidence="7">Belongs to the CENP-I/CTF3 family.</text>
</comment>
<keyword id="KW-0002">3D-structure</keyword>
<keyword id="KW-0007">Acetylation</keyword>
<keyword id="KW-0131">Cell cycle</keyword>
<keyword id="KW-0132">Cell division</keyword>
<keyword id="KW-0137">Centromere</keyword>
<keyword id="KW-0158">Chromosome</keyword>
<keyword id="KW-0995">Kinetochore</keyword>
<keyword id="KW-0469">Meiosis</keyword>
<keyword id="KW-0498">Mitosis</keyword>
<keyword id="KW-0539">Nucleus</keyword>
<keyword id="KW-1185">Reference proteome</keyword>
<feature type="initiator methionine" description="Removed" evidence="8">
    <location>
        <position position="1"/>
    </location>
</feature>
<feature type="chain" id="PRO_0000079493" description="Inner kinetochore subunit CTF3">
    <location>
        <begin position="2"/>
        <end position="733"/>
    </location>
</feature>
<feature type="modified residue" description="N-acetylserine" evidence="8">
    <location>
        <position position="2"/>
    </location>
</feature>
<feature type="helix" evidence="10">
    <location>
        <begin position="4"/>
        <end position="14"/>
    </location>
</feature>
<feature type="helix" evidence="10">
    <location>
        <begin position="21"/>
        <end position="38"/>
    </location>
</feature>
<feature type="helix" evidence="10">
    <location>
        <begin position="42"/>
        <end position="54"/>
    </location>
</feature>
<feature type="strand" evidence="10">
    <location>
        <begin position="56"/>
        <end position="58"/>
    </location>
</feature>
<feature type="helix" evidence="10">
    <location>
        <begin position="60"/>
        <end position="70"/>
    </location>
</feature>
<feature type="strand" evidence="10">
    <location>
        <begin position="73"/>
        <end position="76"/>
    </location>
</feature>
<feature type="helix" evidence="10">
    <location>
        <begin position="79"/>
        <end position="86"/>
    </location>
</feature>
<feature type="helix" evidence="9">
    <location>
        <begin position="94"/>
        <end position="96"/>
    </location>
</feature>
<feature type="strand" evidence="9">
    <location>
        <begin position="97"/>
        <end position="99"/>
    </location>
</feature>
<feature type="helix" evidence="10">
    <location>
        <begin position="104"/>
        <end position="116"/>
    </location>
</feature>
<feature type="helix" evidence="10">
    <location>
        <begin position="118"/>
        <end position="120"/>
    </location>
</feature>
<feature type="helix" evidence="10">
    <location>
        <begin position="126"/>
        <end position="140"/>
    </location>
</feature>
<feature type="helix" evidence="10">
    <location>
        <begin position="143"/>
        <end position="145"/>
    </location>
</feature>
<feature type="helix" evidence="10">
    <location>
        <begin position="146"/>
        <end position="156"/>
    </location>
</feature>
<feature type="turn" evidence="10">
    <location>
        <begin position="160"/>
        <end position="162"/>
    </location>
</feature>
<feature type="helix" evidence="10">
    <location>
        <begin position="165"/>
        <end position="176"/>
    </location>
</feature>
<feature type="helix" evidence="9">
    <location>
        <begin position="178"/>
        <end position="180"/>
    </location>
</feature>
<feature type="helix" evidence="10">
    <location>
        <begin position="183"/>
        <end position="198"/>
    </location>
</feature>
<feature type="helix" evidence="10">
    <location>
        <begin position="202"/>
        <end position="210"/>
    </location>
</feature>
<feature type="helix" evidence="10">
    <location>
        <begin position="217"/>
        <end position="222"/>
    </location>
</feature>
<feature type="helix" evidence="10">
    <location>
        <begin position="228"/>
        <end position="240"/>
    </location>
</feature>
<feature type="strand" evidence="12">
    <location>
        <begin position="244"/>
        <end position="246"/>
    </location>
</feature>
<feature type="helix" evidence="9">
    <location>
        <begin position="248"/>
        <end position="264"/>
    </location>
</feature>
<feature type="turn" evidence="9">
    <location>
        <begin position="265"/>
        <end position="267"/>
    </location>
</feature>
<feature type="strand" evidence="11">
    <location>
        <begin position="287"/>
        <end position="289"/>
    </location>
</feature>
<feature type="turn" evidence="11">
    <location>
        <begin position="290"/>
        <end position="292"/>
    </location>
</feature>
<feature type="helix" evidence="9">
    <location>
        <begin position="296"/>
        <end position="301"/>
    </location>
</feature>
<feature type="turn" evidence="12">
    <location>
        <begin position="302"/>
        <end position="305"/>
    </location>
</feature>
<feature type="helix" evidence="9">
    <location>
        <begin position="312"/>
        <end position="315"/>
    </location>
</feature>
<feature type="turn" evidence="9">
    <location>
        <begin position="333"/>
        <end position="347"/>
    </location>
</feature>
<feature type="helix" evidence="9">
    <location>
        <begin position="355"/>
        <end position="368"/>
    </location>
</feature>
<feature type="helix" evidence="9">
    <location>
        <begin position="375"/>
        <end position="386"/>
    </location>
</feature>
<feature type="helix" evidence="9">
    <location>
        <begin position="390"/>
        <end position="400"/>
    </location>
</feature>
<feature type="strand" evidence="9">
    <location>
        <begin position="401"/>
        <end position="403"/>
    </location>
</feature>
<feature type="helix" evidence="9">
    <location>
        <begin position="404"/>
        <end position="408"/>
    </location>
</feature>
<feature type="helix" evidence="9">
    <location>
        <begin position="410"/>
        <end position="420"/>
    </location>
</feature>
<feature type="strand" evidence="9">
    <location>
        <begin position="421"/>
        <end position="423"/>
    </location>
</feature>
<feature type="helix" evidence="9">
    <location>
        <begin position="432"/>
        <end position="447"/>
    </location>
</feature>
<feature type="helix" evidence="9">
    <location>
        <begin position="458"/>
        <end position="474"/>
    </location>
</feature>
<feature type="strand" evidence="12">
    <location>
        <begin position="475"/>
        <end position="478"/>
    </location>
</feature>
<feature type="helix" evidence="9">
    <location>
        <begin position="479"/>
        <end position="490"/>
    </location>
</feature>
<feature type="turn" evidence="9">
    <location>
        <begin position="491"/>
        <end position="494"/>
    </location>
</feature>
<feature type="turn" evidence="9">
    <location>
        <begin position="496"/>
        <end position="498"/>
    </location>
</feature>
<feature type="strand" evidence="9">
    <location>
        <begin position="501"/>
        <end position="503"/>
    </location>
</feature>
<feature type="turn" evidence="9">
    <location>
        <begin position="506"/>
        <end position="511"/>
    </location>
</feature>
<feature type="helix" evidence="9">
    <location>
        <begin position="512"/>
        <end position="524"/>
    </location>
</feature>
<feature type="turn" evidence="12">
    <location>
        <begin position="525"/>
        <end position="527"/>
    </location>
</feature>
<feature type="helix" evidence="9">
    <location>
        <begin position="532"/>
        <end position="534"/>
    </location>
</feature>
<feature type="turn" evidence="9">
    <location>
        <begin position="539"/>
        <end position="541"/>
    </location>
</feature>
<feature type="helix" evidence="9">
    <location>
        <begin position="542"/>
        <end position="546"/>
    </location>
</feature>
<feature type="helix" evidence="9">
    <location>
        <begin position="551"/>
        <end position="562"/>
    </location>
</feature>
<feature type="turn" evidence="9">
    <location>
        <begin position="566"/>
        <end position="568"/>
    </location>
</feature>
<feature type="strand" evidence="9">
    <location>
        <begin position="569"/>
        <end position="571"/>
    </location>
</feature>
<feature type="strand" evidence="11">
    <location>
        <begin position="573"/>
        <end position="575"/>
    </location>
</feature>
<feature type="helix" evidence="9">
    <location>
        <begin position="576"/>
        <end position="588"/>
    </location>
</feature>
<feature type="turn" evidence="9">
    <location>
        <begin position="590"/>
        <end position="593"/>
    </location>
</feature>
<feature type="turn" evidence="9">
    <location>
        <begin position="597"/>
        <end position="599"/>
    </location>
</feature>
<feature type="strand" evidence="9">
    <location>
        <begin position="603"/>
        <end position="606"/>
    </location>
</feature>
<feature type="helix" evidence="9">
    <location>
        <begin position="608"/>
        <end position="614"/>
    </location>
</feature>
<feature type="turn" evidence="12">
    <location>
        <begin position="615"/>
        <end position="617"/>
    </location>
</feature>
<feature type="helix" evidence="12">
    <location>
        <begin position="623"/>
        <end position="625"/>
    </location>
</feature>
<feature type="turn" evidence="9">
    <location>
        <begin position="627"/>
        <end position="629"/>
    </location>
</feature>
<feature type="strand" evidence="9">
    <location>
        <begin position="630"/>
        <end position="632"/>
    </location>
</feature>
<feature type="turn" evidence="9">
    <location>
        <begin position="633"/>
        <end position="635"/>
    </location>
</feature>
<feature type="turn" evidence="9">
    <location>
        <begin position="637"/>
        <end position="639"/>
    </location>
</feature>
<feature type="helix" evidence="9">
    <location>
        <begin position="640"/>
        <end position="654"/>
    </location>
</feature>
<feature type="strand" evidence="11">
    <location>
        <begin position="662"/>
        <end position="664"/>
    </location>
</feature>
<feature type="helix" evidence="9">
    <location>
        <begin position="667"/>
        <end position="676"/>
    </location>
</feature>
<feature type="helix" evidence="9">
    <location>
        <begin position="678"/>
        <end position="683"/>
    </location>
</feature>
<feature type="strand" evidence="9">
    <location>
        <begin position="684"/>
        <end position="686"/>
    </location>
</feature>
<feature type="helix" evidence="9">
    <location>
        <begin position="693"/>
        <end position="704"/>
    </location>
</feature>
<feature type="helix" evidence="9">
    <location>
        <begin position="712"/>
        <end position="722"/>
    </location>
</feature>
<feature type="strand" evidence="9">
    <location>
        <begin position="723"/>
        <end position="725"/>
    </location>
</feature>
<feature type="helix" evidence="11">
    <location>
        <begin position="726"/>
        <end position="728"/>
    </location>
</feature>
<gene>
    <name type="primary">CTF3</name>
    <name type="synonym">CHL3</name>
    <name type="ordered locus">YLR381W</name>
</gene>
<proteinExistence type="evidence at protein level"/>
<dbReference type="EMBL" id="U19104">
    <property type="protein sequence ID" value="AAB67274.1"/>
    <property type="molecule type" value="Genomic_DNA"/>
</dbReference>
<dbReference type="EMBL" id="X05143">
    <property type="protein sequence ID" value="CAA28792.1"/>
    <property type="molecule type" value="Genomic_DNA"/>
</dbReference>
<dbReference type="EMBL" id="BK006945">
    <property type="protein sequence ID" value="DAA09682.1"/>
    <property type="molecule type" value="Genomic_DNA"/>
</dbReference>
<dbReference type="PIR" id="S51468">
    <property type="entry name" value="S51468"/>
</dbReference>
<dbReference type="RefSeq" id="NP_013485.1">
    <property type="nucleotide sequence ID" value="NM_001182270.1"/>
</dbReference>
<dbReference type="PDB" id="6NUW">
    <property type="method" value="EM"/>
    <property type="resolution" value="4.25 A"/>
    <property type="chains" value="H/Y=1-733"/>
</dbReference>
<dbReference type="PDB" id="6OUA">
    <property type="method" value="EM"/>
    <property type="resolution" value="4.18 A"/>
    <property type="chains" value="I=1-733"/>
</dbReference>
<dbReference type="PDB" id="6QLD">
    <property type="method" value="EM"/>
    <property type="resolution" value="4.15 A"/>
    <property type="chains" value="I=321-728"/>
</dbReference>
<dbReference type="PDB" id="6QLE">
    <property type="method" value="EM"/>
    <property type="resolution" value="3.55 A"/>
    <property type="chains" value="I=335-733"/>
</dbReference>
<dbReference type="PDB" id="6WUC">
    <property type="method" value="EM"/>
    <property type="resolution" value="3.23 A"/>
    <property type="chains" value="I=1-733"/>
</dbReference>
<dbReference type="PDB" id="6YPC">
    <property type="method" value="X-ray"/>
    <property type="resolution" value="2.90 A"/>
    <property type="chains" value="I=1-245"/>
</dbReference>
<dbReference type="PDB" id="7L7Q">
    <property type="method" value="EM"/>
    <property type="resolution" value="3.70 A"/>
    <property type="chains" value="I=1-733"/>
</dbReference>
<dbReference type="PDB" id="8OVW">
    <property type="method" value="EM"/>
    <property type="resolution" value="3.40 A"/>
    <property type="chains" value="I=1-733"/>
</dbReference>
<dbReference type="PDB" id="8OW0">
    <property type="method" value="EM"/>
    <property type="resolution" value="3.40 A"/>
    <property type="chains" value="I=1-733"/>
</dbReference>
<dbReference type="PDB" id="8OW1">
    <property type="method" value="EM"/>
    <property type="resolution" value="3.70 A"/>
    <property type="chains" value="I/II=1-733"/>
</dbReference>
<dbReference type="PDBsum" id="6NUW"/>
<dbReference type="PDBsum" id="6OUA"/>
<dbReference type="PDBsum" id="6QLD"/>
<dbReference type="PDBsum" id="6QLE"/>
<dbReference type="PDBsum" id="6WUC"/>
<dbReference type="PDBsum" id="6YPC"/>
<dbReference type="PDBsum" id="7L7Q"/>
<dbReference type="PDBsum" id="8OVW"/>
<dbReference type="PDBsum" id="8OW0"/>
<dbReference type="PDBsum" id="8OW1"/>
<dbReference type="EMDB" id="EMD-0523"/>
<dbReference type="EMDB" id="EMD-17224"/>
<dbReference type="EMDB" id="EMD-17226"/>
<dbReference type="EMDB" id="EMD-17227"/>
<dbReference type="EMDB" id="EMD-20200"/>
<dbReference type="EMDB" id="EMD-21910"/>
<dbReference type="EMDB" id="EMD-23216"/>
<dbReference type="EMDB" id="EMD-4579"/>
<dbReference type="EMDB" id="EMD-4580"/>
<dbReference type="SMR" id="Q12748"/>
<dbReference type="BioGRID" id="31640">
    <property type="interactions" value="163"/>
</dbReference>
<dbReference type="ComplexPortal" id="CPX-1156">
    <property type="entry name" value="Central kinetochore CTF19 complex"/>
</dbReference>
<dbReference type="ComplexPortal" id="CPX-2533">
    <property type="entry name" value="Kinetochore CCAN complex"/>
</dbReference>
<dbReference type="DIP" id="DIP-4647N"/>
<dbReference type="FunCoup" id="Q12748">
    <property type="interactions" value="110"/>
</dbReference>
<dbReference type="IntAct" id="Q12748">
    <property type="interactions" value="17"/>
</dbReference>
<dbReference type="MINT" id="Q12748"/>
<dbReference type="STRING" id="4932.YLR381W"/>
<dbReference type="iPTMnet" id="Q12748"/>
<dbReference type="PaxDb" id="4932-YLR381W"/>
<dbReference type="PeptideAtlas" id="Q12748"/>
<dbReference type="EnsemblFungi" id="YLR381W_mRNA">
    <property type="protein sequence ID" value="YLR381W"/>
    <property type="gene ID" value="YLR381W"/>
</dbReference>
<dbReference type="GeneID" id="851097"/>
<dbReference type="KEGG" id="sce:YLR381W"/>
<dbReference type="AGR" id="SGD:S000004373"/>
<dbReference type="SGD" id="S000004373">
    <property type="gene designation" value="CTF3"/>
</dbReference>
<dbReference type="VEuPathDB" id="FungiDB:YLR381W"/>
<dbReference type="eggNOG" id="ENOG502QS8Q">
    <property type="taxonomic scope" value="Eukaryota"/>
</dbReference>
<dbReference type="HOGENOM" id="CLU_022668_0_0_1"/>
<dbReference type="InParanoid" id="Q12748"/>
<dbReference type="OMA" id="NYLWRNK"/>
<dbReference type="OrthoDB" id="6347512at2759"/>
<dbReference type="BioCyc" id="YEAST:G3O-32447-MONOMER"/>
<dbReference type="BioGRID-ORCS" id="851097">
    <property type="hits" value="1 hit in 10 CRISPR screens"/>
</dbReference>
<dbReference type="PRO" id="PR:Q12748"/>
<dbReference type="Proteomes" id="UP000002311">
    <property type="component" value="Chromosome XII"/>
</dbReference>
<dbReference type="RNAct" id="Q12748">
    <property type="molecule type" value="protein"/>
</dbReference>
<dbReference type="GO" id="GO:0000776">
    <property type="term" value="C:kinetochore"/>
    <property type="evidence" value="ECO:0000314"/>
    <property type="project" value="SGD"/>
</dbReference>
<dbReference type="GO" id="GO:0005634">
    <property type="term" value="C:nucleus"/>
    <property type="evidence" value="ECO:0007669"/>
    <property type="project" value="UniProtKB-SubCell"/>
</dbReference>
<dbReference type="GO" id="GO:0008608">
    <property type="term" value="P:attachment of spindle microtubules to kinetochore"/>
    <property type="evidence" value="ECO:0000303"/>
    <property type="project" value="ComplexPortal"/>
</dbReference>
<dbReference type="GO" id="GO:0051301">
    <property type="term" value="P:cell division"/>
    <property type="evidence" value="ECO:0007669"/>
    <property type="project" value="UniProtKB-KW"/>
</dbReference>
<dbReference type="GO" id="GO:0007059">
    <property type="term" value="P:chromosome segregation"/>
    <property type="evidence" value="ECO:0000315"/>
    <property type="project" value="SGD"/>
</dbReference>
<dbReference type="GO" id="GO:0006270">
    <property type="term" value="P:DNA replication initiation"/>
    <property type="evidence" value="ECO:0000315"/>
    <property type="project" value="SGD"/>
</dbReference>
<dbReference type="GO" id="GO:0034087">
    <property type="term" value="P:establishment of mitotic sister chromatid cohesion"/>
    <property type="evidence" value="ECO:0000315"/>
    <property type="project" value="SGD"/>
</dbReference>
<dbReference type="GO" id="GO:0051321">
    <property type="term" value="P:meiotic cell cycle"/>
    <property type="evidence" value="ECO:0007669"/>
    <property type="project" value="UniProtKB-KW"/>
</dbReference>
<dbReference type="GO" id="GO:0007094">
    <property type="term" value="P:mitotic spindle assembly checkpoint signaling"/>
    <property type="evidence" value="ECO:0000315"/>
    <property type="project" value="SGD"/>
</dbReference>
<dbReference type="CDD" id="cd22647">
    <property type="entry name" value="CTF3_NTD_HEAT"/>
    <property type="match status" value="1"/>
</dbReference>
<accession>Q12748</accession>
<accession>D6VZ16</accession>
<accession>Q7LHY6</accession>
<evidence type="ECO:0000269" key="1">
    <source>
    </source>
</evidence>
<evidence type="ECO:0000269" key="2">
    <source>
    </source>
</evidence>
<evidence type="ECO:0000269" key="3">
    <source>
    </source>
</evidence>
<evidence type="ECO:0000269" key="4">
    <source>
    </source>
</evidence>
<evidence type="ECO:0000269" key="5">
    <source>
    </source>
</evidence>
<evidence type="ECO:0000303" key="6">
    <source>
    </source>
</evidence>
<evidence type="ECO:0000305" key="7"/>
<evidence type="ECO:0007744" key="8">
    <source>
    </source>
</evidence>
<evidence type="ECO:0007829" key="9">
    <source>
        <dbReference type="PDB" id="6WUC"/>
    </source>
</evidence>
<evidence type="ECO:0007829" key="10">
    <source>
        <dbReference type="PDB" id="6YPC"/>
    </source>
</evidence>
<evidence type="ECO:0007829" key="11">
    <source>
        <dbReference type="PDB" id="8OVW"/>
    </source>
</evidence>
<evidence type="ECO:0007829" key="12">
    <source>
        <dbReference type="PDB" id="8OW0"/>
    </source>
</evidence>
<organism>
    <name type="scientific">Saccharomyces cerevisiae (strain ATCC 204508 / S288c)</name>
    <name type="common">Baker's yeast</name>
    <dbReference type="NCBI Taxonomy" id="559292"/>
    <lineage>
        <taxon>Eukaryota</taxon>
        <taxon>Fungi</taxon>
        <taxon>Dikarya</taxon>
        <taxon>Ascomycota</taxon>
        <taxon>Saccharomycotina</taxon>
        <taxon>Saccharomycetes</taxon>
        <taxon>Saccharomycetales</taxon>
        <taxon>Saccharomycetaceae</taxon>
        <taxon>Saccharomyces</taxon>
    </lineage>
</organism>
<reference key="1">
    <citation type="journal article" date="1997" name="Nature">
        <title>The nucleotide sequence of Saccharomyces cerevisiae chromosome XII.</title>
        <authorList>
            <person name="Johnston M."/>
            <person name="Hillier L.W."/>
            <person name="Riles L."/>
            <person name="Albermann K."/>
            <person name="Andre B."/>
            <person name="Ansorge W."/>
            <person name="Benes V."/>
            <person name="Brueckner M."/>
            <person name="Delius H."/>
            <person name="Dubois E."/>
            <person name="Duesterhoeft A."/>
            <person name="Entian K.-D."/>
            <person name="Floeth M."/>
            <person name="Goffeau A."/>
            <person name="Hebling U."/>
            <person name="Heumann K."/>
            <person name="Heuss-Neitzel D."/>
            <person name="Hilbert H."/>
            <person name="Hilger F."/>
            <person name="Kleine K."/>
            <person name="Koetter P."/>
            <person name="Louis E.J."/>
            <person name="Messenguy F."/>
            <person name="Mewes H.-W."/>
            <person name="Miosga T."/>
            <person name="Moestl D."/>
            <person name="Mueller-Auer S."/>
            <person name="Nentwich U."/>
            <person name="Obermaier B."/>
            <person name="Piravandi E."/>
            <person name="Pohl T.M."/>
            <person name="Portetelle D."/>
            <person name="Purnelle B."/>
            <person name="Rechmann S."/>
            <person name="Rieger M."/>
            <person name="Rinke M."/>
            <person name="Rose M."/>
            <person name="Scharfe M."/>
            <person name="Scherens B."/>
            <person name="Scholler P."/>
            <person name="Schwager C."/>
            <person name="Schwarz S."/>
            <person name="Underwood A.P."/>
            <person name="Urrestarazu L.A."/>
            <person name="Vandenbol M."/>
            <person name="Verhasselt P."/>
            <person name="Vierendeels F."/>
            <person name="Voet M."/>
            <person name="Volckaert G."/>
            <person name="Voss H."/>
            <person name="Wambutt R."/>
            <person name="Wedler E."/>
            <person name="Wedler H."/>
            <person name="Zimmermann F.K."/>
            <person name="Zollner A."/>
            <person name="Hani J."/>
            <person name="Hoheisel J.D."/>
        </authorList>
    </citation>
    <scope>NUCLEOTIDE SEQUENCE [LARGE SCALE GENOMIC DNA]</scope>
    <source>
        <strain>ATCC 204508 / S288c</strain>
    </source>
</reference>
<reference key="2">
    <citation type="journal article" date="2014" name="G3 (Bethesda)">
        <title>The reference genome sequence of Saccharomyces cerevisiae: Then and now.</title>
        <authorList>
            <person name="Engel S.R."/>
            <person name="Dietrich F.S."/>
            <person name="Fisk D.G."/>
            <person name="Binkley G."/>
            <person name="Balakrishnan R."/>
            <person name="Costanzo M.C."/>
            <person name="Dwight S.S."/>
            <person name="Hitz B.C."/>
            <person name="Karra K."/>
            <person name="Nash R.S."/>
            <person name="Weng S."/>
            <person name="Wong E.D."/>
            <person name="Lloyd P."/>
            <person name="Skrzypek M.S."/>
            <person name="Miyasato S.R."/>
            <person name="Simison M."/>
            <person name="Cherry J.M."/>
        </authorList>
    </citation>
    <scope>GENOME REANNOTATION</scope>
    <source>
        <strain>ATCC 204508 / S288c</strain>
    </source>
</reference>
<reference key="3">
    <citation type="journal article" date="1987" name="EMBO J.">
        <title>Three suppressor mutations which cure a mitochondrial RNA maturase deficiency occur at the same codon in the open reading frame of the nuclear NAM2 gene.</title>
        <authorList>
            <person name="Labouesse M."/>
            <person name="Herbert C.J."/>
            <person name="Dujardin G."/>
            <person name="Slonimski P.P."/>
        </authorList>
    </citation>
    <scope>NUCLEOTIDE SEQUENCE [GENOMIC DNA] OF 538-733</scope>
    <source>
        <strain>AB1-4A/8/55</strain>
    </source>
</reference>
<reference key="4">
    <citation type="journal article" date="2002" name="Cell">
        <title>Phospho-regulation of kinetochore-microtubule attachments by the Aurora kinase Ipl1p.</title>
        <authorList>
            <person name="Cheeseman I.M."/>
            <person name="Anderson S."/>
            <person name="Jwa M."/>
            <person name="Green E.M."/>
            <person name="Kang J.-S."/>
            <person name="Yates J.R. III"/>
            <person name="Chan C.S.M."/>
            <person name="Drubin D.G."/>
            <person name="Barnes G."/>
        </authorList>
    </citation>
    <scope>IDENTIFICATION BY MASS SPECTROMETRY</scope>
    <scope>COMPONENT OF CTF19 COMPLEX</scope>
</reference>
<reference key="5">
    <citation type="journal article" date="2002" name="Genes Dev.">
        <title>Ctf3p, the Mis6 budding yeast homolog, interacts with Mcm22p and Mcm16p at the yeast outer kinetochore.</title>
        <authorList>
            <person name="Measday V."/>
            <person name="Hailey D.W."/>
            <person name="Pot I."/>
            <person name="Givan S.A."/>
            <person name="Hyland K.M."/>
            <person name="Cagney G."/>
            <person name="Fields S."/>
            <person name="Davis T.N."/>
            <person name="Hieter P."/>
        </authorList>
    </citation>
    <scope>INTERACTION WITH CTF19; MCM16 AND MCM22</scope>
    <scope>SUBCELLULAR LOCATION</scope>
</reference>
<reference key="6">
    <citation type="journal article" date="2003" name="Mol. Biol. Cell">
        <title>Chl4p and Iml3p are two new members of the budding yeast outer kinetochore.</title>
        <authorList>
            <person name="Pot I."/>
            <person name="Measday V."/>
            <person name="Snydsman B."/>
            <person name="Cagney G."/>
            <person name="Fields S."/>
            <person name="Davis T.N."/>
            <person name="Muller E.G.D."/>
            <person name="Hieter P."/>
        </authorList>
    </citation>
    <scope>INTERACTION WITH CHL4 AND CTF19</scope>
    <scope>SUBCELLULAR LOCATION</scope>
</reference>
<reference key="7">
    <citation type="journal article" date="2003" name="Mol. Cell">
        <title>Assigning function to yeast proteins by integration of technologies.</title>
        <authorList>
            <person name="Hazbun T.R."/>
            <person name="Malmstroem L."/>
            <person name="Anderson S."/>
            <person name="Graczyk B.J."/>
            <person name="Fox B."/>
            <person name="Riffle M."/>
            <person name="Sundin B.A."/>
            <person name="Aranda J.D."/>
            <person name="McDonald W.H."/>
            <person name="Chiu C.-H."/>
            <person name="Snydsman B.E."/>
            <person name="Bradley P."/>
            <person name="Muller E.G.D."/>
            <person name="Fields S."/>
            <person name="Baker D."/>
            <person name="Yates J.R. III"/>
            <person name="Davis T.N."/>
        </authorList>
    </citation>
    <scope>IDENTIFICATION BY MASS SPECTROMETRY</scope>
</reference>
<reference key="8">
    <citation type="journal article" date="2003" name="Nature">
        <title>Global analysis of protein localization in budding yeast.</title>
        <authorList>
            <person name="Huh W.-K."/>
            <person name="Falvo J.V."/>
            <person name="Gerke L.C."/>
            <person name="Carroll A.S."/>
            <person name="Howson R.W."/>
            <person name="Weissman J.S."/>
            <person name="O'Shea E.K."/>
        </authorList>
    </citation>
    <scope>SUBCELLULAR LOCATION [LARGE SCALE ANALYSIS]</scope>
</reference>
<reference key="9">
    <citation type="journal article" date="2003" name="Nature">
        <title>Global analysis of protein expression in yeast.</title>
        <authorList>
            <person name="Ghaemmaghami S."/>
            <person name="Huh W.-K."/>
            <person name="Bower K."/>
            <person name="Howson R.W."/>
            <person name="Belle A."/>
            <person name="Dephoure N."/>
            <person name="O'Shea E.K."/>
            <person name="Weissman J.S."/>
        </authorList>
    </citation>
    <scope>LEVEL OF PROTEIN EXPRESSION [LARGE SCALE ANALYSIS]</scope>
</reference>
<reference key="10">
    <citation type="journal article" date="2012" name="Nat. Cell Biol.">
        <title>CENP-T proteins are conserved centromere receptors of the Ndc80 complex.</title>
        <authorList>
            <person name="Schleiffer A."/>
            <person name="Maier M."/>
            <person name="Litos G."/>
            <person name="Lampert F."/>
            <person name="Hornung P."/>
            <person name="Mechtler K."/>
            <person name="Westermann S."/>
        </authorList>
    </citation>
    <scope>IDENTIFICATION IN CCAN</scope>
    <scope>SUBUNIT</scope>
</reference>
<reference key="11">
    <citation type="journal article" date="2012" name="Proc. Natl. Acad. Sci. U.S.A.">
        <title>N-terminal acetylome analyses and functional insights of the N-terminal acetyltransferase NatB.</title>
        <authorList>
            <person name="Van Damme P."/>
            <person name="Lasa M."/>
            <person name="Polevoda B."/>
            <person name="Gazquez C."/>
            <person name="Elosegui-Artola A."/>
            <person name="Kim D.S."/>
            <person name="De Juan-Pardo E."/>
            <person name="Demeyer K."/>
            <person name="Hole K."/>
            <person name="Larrea E."/>
            <person name="Timmerman E."/>
            <person name="Prieto J."/>
            <person name="Arnesen T."/>
            <person name="Sherman F."/>
            <person name="Gevaert K."/>
            <person name="Aldabe R."/>
        </authorList>
    </citation>
    <scope>ACETYLATION [LARGE SCALE ANALYSIS] AT SER-2</scope>
    <scope>CLEAVAGE OF INITIATOR METHIONINE [LARGE SCALE ANALYSIS]</scope>
    <scope>IDENTIFICATION BY MASS SPECTROMETRY [LARGE SCALE ANALYSIS]</scope>
</reference>
<sequence>MSLILDDIILSLTNANERTPPQALKTTLSLLYEKSKQYGLSSPQLQALVRLLCETSIIDTVTKVYIVENCFLPDGYLTKELLLEIINHLGTPTVFSRYRIQTPPVLQSALCKWLVHVYFLFPVHSEREHNISSSIWLHLWQFSFLQKWITPLVIWQATTPVDVKPWKLSIIKRCAMHPGYRDAPGSATLILQRFQCLVGASSQITESIITINCNRKTLKSHRNLKLDAHFLSILKRILSRAHPANFPADTVQNTIDMYLSEIHQLGADSIYPLRLQSLPEYVPSDSTVSLWDVTSLEQLAQNWPQLHIPNDVDYMMKPSLNSNVLLPRKVMSRDSLKHLYSSIILIKNSRDESSSPYEWCIWQLKRCFAHQIETPQEVIPIIISVSSMDNKLSSRIIQTFCNLKYLKLDELTLKKVCGGILPLWKPELISGTREFFVKFMASIFMWSTRDGHDNNCTFSETCFYVLQMITNWVLDDKLIALGLTLLHDMQSLLTLDKIFNNATSNRFSTMAFISSLDILTQLSKQTKSDYAIQYLIVGPDIMNKVFSSDDPLLLSAACRYLVATKNKLMQYPSTNKFVRMQNQYIMDLTNYLYRNKVLSSKSLFGVSPDFFKQILENLYIPTADFKNAKFFTITGIPALSYICIIILRRLETAENTKIKFTSGIINEETFNNFFRVHHDEIGQHGWIKGVNNIHDLRVKILMHLSNTANPYRDIAAFLFTYLKSLSKYSVQNS</sequence>
<name>CENPI_YEAST</name>
<protein>
    <recommendedName>
        <fullName evidence="7">Inner kinetochore subunit CTF3</fullName>
    </recommendedName>
    <alternativeName>
        <fullName evidence="6">CENP-I homolog</fullName>
    </alternativeName>
    <alternativeName>
        <fullName>Chromosome loss protein 3</fullName>
    </alternativeName>
    <alternativeName>
        <fullName>Chromosome transmission fidelity protein 3</fullName>
    </alternativeName>
    <alternativeName>
        <fullName evidence="7">Constitutive centromere-associated network protein CTF3</fullName>
    </alternativeName>
</protein>